<gene>
    <name type="ORF">NFIA_089900</name>
</gene>
<accession>A1DI25</accession>
<keyword id="KW-0963">Cytoplasm</keyword>
<keyword id="KW-0396">Initiation factor</keyword>
<keyword id="KW-0648">Protein biosynthesis</keyword>
<keyword id="KW-1185">Reference proteome</keyword>
<keyword id="KW-0694">RNA-binding</keyword>
<dbReference type="EMBL" id="DS027696">
    <property type="protein sequence ID" value="EAW19032.1"/>
    <property type="molecule type" value="Genomic_DNA"/>
</dbReference>
<dbReference type="RefSeq" id="XP_001260929.1">
    <property type="nucleotide sequence ID" value="XM_001260928.1"/>
</dbReference>
<dbReference type="SMR" id="A1DI25"/>
<dbReference type="STRING" id="331117.A1DI25"/>
<dbReference type="EnsemblFungi" id="EAW19032">
    <property type="protein sequence ID" value="EAW19032"/>
    <property type="gene ID" value="NFIA_089900"/>
</dbReference>
<dbReference type="GeneID" id="4587487"/>
<dbReference type="KEGG" id="nfi:NFIA_089900"/>
<dbReference type="VEuPathDB" id="FungiDB:NFIA_089900"/>
<dbReference type="eggNOG" id="KOG2479">
    <property type="taxonomic scope" value="Eukaryota"/>
</dbReference>
<dbReference type="HOGENOM" id="CLU_024521_2_0_1"/>
<dbReference type="OMA" id="FMDKRDN"/>
<dbReference type="OrthoDB" id="16538at2759"/>
<dbReference type="Proteomes" id="UP000006702">
    <property type="component" value="Unassembled WGS sequence"/>
</dbReference>
<dbReference type="GO" id="GO:0005829">
    <property type="term" value="C:cytosol"/>
    <property type="evidence" value="ECO:0007669"/>
    <property type="project" value="EnsemblFungi"/>
</dbReference>
<dbReference type="GO" id="GO:0016282">
    <property type="term" value="C:eukaryotic 43S preinitiation complex"/>
    <property type="evidence" value="ECO:0007669"/>
    <property type="project" value="UniProtKB-UniRule"/>
</dbReference>
<dbReference type="GO" id="GO:0033290">
    <property type="term" value="C:eukaryotic 48S preinitiation complex"/>
    <property type="evidence" value="ECO:0007669"/>
    <property type="project" value="UniProtKB-UniRule"/>
</dbReference>
<dbReference type="GO" id="GO:0071540">
    <property type="term" value="C:eukaryotic translation initiation factor 3 complex, eIF3e"/>
    <property type="evidence" value="ECO:0007669"/>
    <property type="project" value="EnsemblFungi"/>
</dbReference>
<dbReference type="GO" id="GO:0071541">
    <property type="term" value="C:eukaryotic translation initiation factor 3 complex, eIF3m"/>
    <property type="evidence" value="ECO:0007669"/>
    <property type="project" value="EnsemblFungi"/>
</dbReference>
<dbReference type="GO" id="GO:0098808">
    <property type="term" value="F:mRNA cap binding"/>
    <property type="evidence" value="ECO:0007669"/>
    <property type="project" value="UniProtKB-UniRule"/>
</dbReference>
<dbReference type="GO" id="GO:0003743">
    <property type="term" value="F:translation initiation factor activity"/>
    <property type="evidence" value="ECO:0007669"/>
    <property type="project" value="UniProtKB-UniRule"/>
</dbReference>
<dbReference type="GO" id="GO:0002191">
    <property type="term" value="P:cap-dependent translational initiation"/>
    <property type="evidence" value="ECO:0007669"/>
    <property type="project" value="UniProtKB-UniRule"/>
</dbReference>
<dbReference type="GO" id="GO:0001732">
    <property type="term" value="P:formation of cytoplasmic translation initiation complex"/>
    <property type="evidence" value="ECO:0007669"/>
    <property type="project" value="UniProtKB-UniRule"/>
</dbReference>
<dbReference type="HAMAP" id="MF_03003">
    <property type="entry name" value="eIF3d"/>
    <property type="match status" value="1"/>
</dbReference>
<dbReference type="InterPro" id="IPR007783">
    <property type="entry name" value="eIF3d"/>
</dbReference>
<dbReference type="PANTHER" id="PTHR12399">
    <property type="entry name" value="EUKARYOTIC TRANSLATION INITIATION FACTOR 3 SUBUNIT 7"/>
    <property type="match status" value="1"/>
</dbReference>
<dbReference type="PANTHER" id="PTHR12399:SF0">
    <property type="entry name" value="EUKARYOTIC TRANSLATION INITIATION FACTOR 3 SUBUNIT D"/>
    <property type="match status" value="1"/>
</dbReference>
<dbReference type="Pfam" id="PF05091">
    <property type="entry name" value="eIF-3_zeta"/>
    <property type="match status" value="1"/>
</dbReference>
<dbReference type="PIRSF" id="PIRSF016281">
    <property type="entry name" value="EIF-3_zeta"/>
    <property type="match status" value="1"/>
</dbReference>
<protein>
    <recommendedName>
        <fullName evidence="2">Eukaryotic translation initiation factor 3 subunit D</fullName>
        <shortName evidence="2">eIF3d</shortName>
    </recommendedName>
</protein>
<sequence>MAPMSIADLVAALPAEDTWGPATPSDNMLDGVPYAPFSKGDKLGRMADWTGDGKDRDRGGRQAYNRNYRDQQVYGAGTSSLFNIQVAEDESSFSVVDNTRTSTKRTFARGGGTVFRGRGQRGVGQRGGRAGFQRVGAGRGQGGDRYYDNRSARGNRGRRFGWKDYDKPQRTREPSVNVRPDWTMLEEVDFNRLSKLNLEAPEGEDLDSYGFLYYYDRSYDKAPVKNAERKLQALERAAYNVTTSQDPVIQELAEKNEATVFATSDILSMLMCAPRSVYSWDIVIVHQGDKIYFDKREGASIDLVTVNENAADAPMETTDSSGKQESINTPSALALEATFINHNFALQTVVESEESKVTFSHPNPFYNAAEETEPLASKGYKYRRFDLSLQGDEEPLNMIVRTEVDAVMKNPVGGEDQQLIVKALNEFDSKAPGSGGALDWRSKLWSQRGAVVATEMKNNSIKLARWTTQAILAKADAMKLGFISRANPRSATSHVILGVVGYKPREFAAQMNLNLGNGWGIVRTIVDRIRSLDAEEEEDKVKKYVLIKDPNRPVIRLYSVPPNTFEEDDEAAEEQEEKAEEESEE</sequence>
<name>EIF3D_NEOFI</name>
<evidence type="ECO:0000250" key="1">
    <source>
        <dbReference type="UniProtKB" id="K7IM66"/>
    </source>
</evidence>
<evidence type="ECO:0000255" key="2">
    <source>
        <dbReference type="HAMAP-Rule" id="MF_03003"/>
    </source>
</evidence>
<evidence type="ECO:0000256" key="3">
    <source>
        <dbReference type="SAM" id="MobiDB-lite"/>
    </source>
</evidence>
<proteinExistence type="inferred from homology"/>
<organism>
    <name type="scientific">Neosartorya fischeri (strain ATCC 1020 / DSM 3700 / CBS 544.65 / FGSC A1164 / JCM 1740 / NRRL 181 / WB 181)</name>
    <name type="common">Aspergillus fischerianus</name>
    <dbReference type="NCBI Taxonomy" id="331117"/>
    <lineage>
        <taxon>Eukaryota</taxon>
        <taxon>Fungi</taxon>
        <taxon>Dikarya</taxon>
        <taxon>Ascomycota</taxon>
        <taxon>Pezizomycotina</taxon>
        <taxon>Eurotiomycetes</taxon>
        <taxon>Eurotiomycetidae</taxon>
        <taxon>Eurotiales</taxon>
        <taxon>Aspergillaceae</taxon>
        <taxon>Aspergillus</taxon>
        <taxon>Aspergillus subgen. Fumigati</taxon>
    </lineage>
</organism>
<reference key="1">
    <citation type="journal article" date="2008" name="PLoS Genet.">
        <title>Genomic islands in the pathogenic filamentous fungus Aspergillus fumigatus.</title>
        <authorList>
            <person name="Fedorova N.D."/>
            <person name="Khaldi N."/>
            <person name="Joardar V.S."/>
            <person name="Maiti R."/>
            <person name="Amedeo P."/>
            <person name="Anderson M.J."/>
            <person name="Crabtree J."/>
            <person name="Silva J.C."/>
            <person name="Badger J.H."/>
            <person name="Albarraq A."/>
            <person name="Angiuoli S."/>
            <person name="Bussey H."/>
            <person name="Bowyer P."/>
            <person name="Cotty P.J."/>
            <person name="Dyer P.S."/>
            <person name="Egan A."/>
            <person name="Galens K."/>
            <person name="Fraser-Liggett C.M."/>
            <person name="Haas B.J."/>
            <person name="Inman J.M."/>
            <person name="Kent R."/>
            <person name="Lemieux S."/>
            <person name="Malavazi I."/>
            <person name="Orvis J."/>
            <person name="Roemer T."/>
            <person name="Ronning C.M."/>
            <person name="Sundaram J.P."/>
            <person name="Sutton G."/>
            <person name="Turner G."/>
            <person name="Venter J.C."/>
            <person name="White O.R."/>
            <person name="Whitty B.R."/>
            <person name="Youngman P."/>
            <person name="Wolfe K.H."/>
            <person name="Goldman G.H."/>
            <person name="Wortman J.R."/>
            <person name="Jiang B."/>
            <person name="Denning D.W."/>
            <person name="Nierman W.C."/>
        </authorList>
    </citation>
    <scope>NUCLEOTIDE SEQUENCE [LARGE SCALE GENOMIC DNA]</scope>
    <source>
        <strain>ATCC 1020 / DSM 3700 / CBS 544.65 / FGSC A1164 / JCM 1740 / NRRL 181 / WB 181</strain>
    </source>
</reference>
<feature type="chain" id="PRO_0000364177" description="Eukaryotic translation initiation factor 3 subunit D">
    <location>
        <begin position="1"/>
        <end position="585"/>
    </location>
</feature>
<feature type="region of interest" description="Disordered" evidence="3">
    <location>
        <begin position="43"/>
        <end position="62"/>
    </location>
</feature>
<feature type="region of interest" description="Disordered" evidence="3">
    <location>
        <begin position="109"/>
        <end position="152"/>
    </location>
</feature>
<feature type="region of interest" description="RNA gate" evidence="1">
    <location>
        <begin position="300"/>
        <end position="314"/>
    </location>
</feature>
<feature type="region of interest" description="Disordered" evidence="3">
    <location>
        <begin position="560"/>
        <end position="585"/>
    </location>
</feature>
<feature type="compositionally biased region" description="Basic and acidic residues" evidence="3">
    <location>
        <begin position="43"/>
        <end position="60"/>
    </location>
</feature>
<feature type="compositionally biased region" description="Gly residues" evidence="3">
    <location>
        <begin position="109"/>
        <end position="130"/>
    </location>
</feature>
<feature type="compositionally biased region" description="Acidic residues" evidence="3">
    <location>
        <begin position="565"/>
        <end position="585"/>
    </location>
</feature>
<comment type="function">
    <text evidence="2">mRNA cap-binding component of the eukaryotic translation initiation factor 3 (eIF-3) complex, which is involved in protein synthesis of a specialized repertoire of mRNAs and, together with other initiation factors, stimulates binding of mRNA and methionyl-tRNAi to the 40S ribosome. The eIF-3 complex specifically targets and initiates translation of a subset of mRNAs involved in cell proliferation. In the eIF-3 complex, eif3d specifically recognizes and binds the 7-methylguanosine cap of a subset of mRNAs.</text>
</comment>
<comment type="subunit">
    <text evidence="2">Component of the eukaryotic translation initiation factor 3 (eIF-3) complex.</text>
</comment>
<comment type="subcellular location">
    <subcellularLocation>
        <location evidence="2">Cytoplasm</location>
    </subcellularLocation>
</comment>
<comment type="domain">
    <text evidence="2">The RNA gate region regulates mRNA cap recognition to prevent promiscuous mRNA-binding before assembly of eif3d into the full eukaryotic translation initiation factor 3 (eIF-3) complex.</text>
</comment>
<comment type="similarity">
    <text evidence="2">Belongs to the eIF-3 subunit D family.</text>
</comment>